<feature type="chain" id="PRO_0000285822" description="Probable ABC transporter ATP-binding protein PEB1C">
    <location>
        <begin position="1"/>
        <end position="242"/>
    </location>
</feature>
<feature type="domain" description="ABC transporter" evidence="1">
    <location>
        <begin position="2"/>
        <end position="236"/>
    </location>
</feature>
<feature type="binding site" evidence="1">
    <location>
        <begin position="34"/>
        <end position="41"/>
    </location>
    <ligand>
        <name>ATP</name>
        <dbReference type="ChEBI" id="CHEBI:30616"/>
    </ligand>
</feature>
<feature type="sequence conflict" description="In Ref. 1; AAA02918." evidence="2" ref="1">
    <original>NI</original>
    <variation>IF</variation>
    <location>
        <begin position="19"/>
        <end position="20"/>
    </location>
</feature>
<feature type="sequence conflict" description="In Ref. 1; AAA02918." evidence="2" ref="1">
    <original>V</original>
    <variation>L</variation>
    <location>
        <position position="126"/>
    </location>
</feature>
<dbReference type="EMBL" id="L13662">
    <property type="protein sequence ID" value="AAA02918.1"/>
    <property type="molecule type" value="Unassigned_DNA"/>
</dbReference>
<dbReference type="EMBL" id="CP000538">
    <property type="protein sequence ID" value="EAQ71847.1"/>
    <property type="molecule type" value="Genomic_DNA"/>
</dbReference>
<dbReference type="PIR" id="C48518">
    <property type="entry name" value="C48518"/>
</dbReference>
<dbReference type="RefSeq" id="WP_002865902.1">
    <property type="nucleotide sequence ID" value="NC_008787.1"/>
</dbReference>
<dbReference type="SMR" id="A1VZQ5"/>
<dbReference type="KEGG" id="cjj:CJJ81176_0929"/>
<dbReference type="eggNOG" id="COG1126">
    <property type="taxonomic scope" value="Bacteria"/>
</dbReference>
<dbReference type="HOGENOM" id="CLU_000604_1_22_7"/>
<dbReference type="Proteomes" id="UP000000646">
    <property type="component" value="Chromosome"/>
</dbReference>
<dbReference type="GO" id="GO:0005886">
    <property type="term" value="C:plasma membrane"/>
    <property type="evidence" value="ECO:0007669"/>
    <property type="project" value="UniProtKB-SubCell"/>
</dbReference>
<dbReference type="GO" id="GO:0015424">
    <property type="term" value="F:ABC-type amino acid transporter activity"/>
    <property type="evidence" value="ECO:0007669"/>
    <property type="project" value="InterPro"/>
</dbReference>
<dbReference type="GO" id="GO:0005524">
    <property type="term" value="F:ATP binding"/>
    <property type="evidence" value="ECO:0007669"/>
    <property type="project" value="UniProtKB-KW"/>
</dbReference>
<dbReference type="GO" id="GO:0016887">
    <property type="term" value="F:ATP hydrolysis activity"/>
    <property type="evidence" value="ECO:0007669"/>
    <property type="project" value="InterPro"/>
</dbReference>
<dbReference type="CDD" id="cd03262">
    <property type="entry name" value="ABC_HisP_GlnQ"/>
    <property type="match status" value="1"/>
</dbReference>
<dbReference type="FunFam" id="3.40.50.300:FF:000020">
    <property type="entry name" value="Amino acid ABC transporter ATP-binding component"/>
    <property type="match status" value="1"/>
</dbReference>
<dbReference type="Gene3D" id="3.40.50.300">
    <property type="entry name" value="P-loop containing nucleotide triphosphate hydrolases"/>
    <property type="match status" value="1"/>
</dbReference>
<dbReference type="InterPro" id="IPR003593">
    <property type="entry name" value="AAA+_ATPase"/>
</dbReference>
<dbReference type="InterPro" id="IPR030679">
    <property type="entry name" value="ABC_ATPase_HisP-typ"/>
</dbReference>
<dbReference type="InterPro" id="IPR003439">
    <property type="entry name" value="ABC_transporter-like_ATP-bd"/>
</dbReference>
<dbReference type="InterPro" id="IPR017871">
    <property type="entry name" value="ABC_transporter-like_CS"/>
</dbReference>
<dbReference type="InterPro" id="IPR050086">
    <property type="entry name" value="MetN_ABC_transporter-like"/>
</dbReference>
<dbReference type="InterPro" id="IPR027417">
    <property type="entry name" value="P-loop_NTPase"/>
</dbReference>
<dbReference type="PANTHER" id="PTHR43166">
    <property type="entry name" value="AMINO ACID IMPORT ATP-BINDING PROTEIN"/>
    <property type="match status" value="1"/>
</dbReference>
<dbReference type="PANTHER" id="PTHR43166:SF4">
    <property type="entry name" value="PHOSPHONATES IMPORT ATP-BINDING PROTEIN PHNC"/>
    <property type="match status" value="1"/>
</dbReference>
<dbReference type="Pfam" id="PF00005">
    <property type="entry name" value="ABC_tran"/>
    <property type="match status" value="1"/>
</dbReference>
<dbReference type="PIRSF" id="PIRSF039085">
    <property type="entry name" value="ABC_ATPase_HisP"/>
    <property type="match status" value="1"/>
</dbReference>
<dbReference type="SMART" id="SM00382">
    <property type="entry name" value="AAA"/>
    <property type="match status" value="1"/>
</dbReference>
<dbReference type="SUPFAM" id="SSF52540">
    <property type="entry name" value="P-loop containing nucleoside triphosphate hydrolases"/>
    <property type="match status" value="1"/>
</dbReference>
<dbReference type="PROSITE" id="PS00211">
    <property type="entry name" value="ABC_TRANSPORTER_1"/>
    <property type="match status" value="1"/>
</dbReference>
<dbReference type="PROSITE" id="PS50893">
    <property type="entry name" value="ABC_TRANSPORTER_2"/>
    <property type="match status" value="1"/>
</dbReference>
<sequence>MIELKNVNKYYGTHHVLKNINLSVKEGEKLVIIGPSGSGKSTTIRCMNGLEEVSSGEVVVNNLVLNHKNKIEICRKYCAMVFQHFNLYPHMTVLQNLTLAPMKLQKKSKKEAEETAFKYLKVVGLVDKANVYPATLSGGQQQRVAIARSLCTKKPYILFDEPTSALDPETIQEVLDVMKEISHQSNTTMVVVTHEMGFAKEVADRIIFMEDGAIVEENIPSEFFSNPKTERARLFLGKILKN</sequence>
<reference key="1">
    <citation type="journal article" date="1993" name="J. Biol. Chem.">
        <title>PEB1, the major cell-binding factor of Campylobacter jejuni, is a homolog of the binding component in Gram-negative nutrient transport systems.</title>
        <authorList>
            <person name="Pei Z."/>
            <person name="Blaser M.J."/>
        </authorList>
    </citation>
    <scope>NUCLEOTIDE SEQUENCE [GENOMIC DNA]</scope>
</reference>
<reference key="2">
    <citation type="submission" date="2006-12" db="EMBL/GenBank/DDBJ databases">
        <authorList>
            <person name="Fouts D.E."/>
            <person name="Nelson K.E."/>
            <person name="Sebastian Y."/>
        </authorList>
    </citation>
    <scope>NUCLEOTIDE SEQUENCE [LARGE SCALE GENOMIC DNA]</scope>
    <source>
        <strain>81-176</strain>
    </source>
</reference>
<gene>
    <name type="primary">peb1C</name>
    <name type="synonym">pebC</name>
    <name type="ordered locus">CJJ81176_0929</name>
</gene>
<accession>A1VZQ5</accession>
<accession>P45677</accession>
<accession>Q9PP11</accession>
<proteinExistence type="inferred from homology"/>
<evidence type="ECO:0000255" key="1">
    <source>
        <dbReference type="PROSITE-ProRule" id="PRU00434"/>
    </source>
</evidence>
<evidence type="ECO:0000305" key="2"/>
<keyword id="KW-0067">ATP-binding</keyword>
<keyword id="KW-0997">Cell inner membrane</keyword>
<keyword id="KW-1003">Cell membrane</keyword>
<keyword id="KW-0472">Membrane</keyword>
<keyword id="KW-0547">Nucleotide-binding</keyword>
<keyword id="KW-0813">Transport</keyword>
<protein>
    <recommendedName>
        <fullName>Probable ABC transporter ATP-binding protein PEB1C</fullName>
    </recommendedName>
</protein>
<name>PEB1C_CAMJJ</name>
<organism>
    <name type="scientific">Campylobacter jejuni subsp. jejuni serotype O:23/36 (strain 81-176)</name>
    <dbReference type="NCBI Taxonomy" id="354242"/>
    <lineage>
        <taxon>Bacteria</taxon>
        <taxon>Pseudomonadati</taxon>
        <taxon>Campylobacterota</taxon>
        <taxon>Epsilonproteobacteria</taxon>
        <taxon>Campylobacterales</taxon>
        <taxon>Campylobacteraceae</taxon>
        <taxon>Campylobacter</taxon>
    </lineage>
</organism>
<comment type="function">
    <text>Most probably involved, with PEB1, in a binding-protein-dependent transport system for an amino acid. Probably responsible for energy coupling to the transport system.</text>
</comment>
<comment type="subcellular location">
    <subcellularLocation>
        <location evidence="2">Cell inner membrane</location>
        <topology evidence="2">Peripheral membrane protein</topology>
    </subcellularLocation>
</comment>
<comment type="similarity">
    <text evidence="2">Belongs to the ABC transporter superfamily.</text>
</comment>